<sequence length="646" mass="70805">MNIRSNPDTTRPAVTTGGLPSSRKIYAVPATAPDLRVPLREIMLSEGAGEPNLPVYDTSGPYTDPGVTIDVNKGLSRARTEWVKQRGGVEQYEGRDIKPEDNGNVGAAHAAKSFTAHHQPLRGVGDAPITQYEFARKGIITKEMIYVAERENLGRKQQLERAEAALADGESFGAAVPAFITPEFVRDEIARGRAIIPANINHGELEPMIIGRNFLTKINANIGNSAVTSSVEEEVDKMVWAIRWGADTVMDLSTGRNIHTTREWILRNSPVPIGTVPIYQALEKCDGDPVKLTWELYKDTLIEQAEQGVDYFTIHAGVRLQYIHLTADRVTGIVSRGGSIMAKWCLAHHQESFLYTHFDEICDLMRKYDVSFSLGDGLRPGSIADANDRAQFAELETLGELTKIAWAKGCQVMIEGPGHVPLHKIKINMDKQLKECGEAPFYTLGPLTTDIAPGYDHITSGIGAAMIGWFGCAMLCYVTPKEHLGLPDRNDVKTGVITYKIAAHAADLGKGHPAAQLRDDALSRARFDFRWQDQFNLGLDPDTAKAFHDETLPKEAHKVAHFCSMCGPKFCSMKITQDVRDYAAGLGDNEKAALNLAGAGSFGSVGMTMSGVIEDGMAQMSEKFRDMGEKLYLDAEKVKESNKALS</sequence>
<evidence type="ECO:0000255" key="1">
    <source>
        <dbReference type="HAMAP-Rule" id="MF_00089"/>
    </source>
</evidence>
<evidence type="ECO:0000256" key="2">
    <source>
        <dbReference type="SAM" id="MobiDB-lite"/>
    </source>
</evidence>
<name>THIC_RHOP2</name>
<reference key="1">
    <citation type="submission" date="2006-01" db="EMBL/GenBank/DDBJ databases">
        <title>Complete sequence of Rhodopseudomonas palustris HaA2.</title>
        <authorList>
            <consortium name="US DOE Joint Genome Institute"/>
            <person name="Copeland A."/>
            <person name="Lucas S."/>
            <person name="Lapidus A."/>
            <person name="Barry K."/>
            <person name="Detter J.C."/>
            <person name="Glavina T."/>
            <person name="Hammon N."/>
            <person name="Israni S."/>
            <person name="Pitluck S."/>
            <person name="Chain P."/>
            <person name="Malfatti S."/>
            <person name="Shin M."/>
            <person name="Vergez L."/>
            <person name="Schmutz J."/>
            <person name="Larimer F."/>
            <person name="Land M."/>
            <person name="Hauser L."/>
            <person name="Pelletier D.A."/>
            <person name="Kyrpides N."/>
            <person name="Anderson I."/>
            <person name="Oda Y."/>
            <person name="Harwood C.S."/>
            <person name="Richardson P."/>
        </authorList>
    </citation>
    <scope>NUCLEOTIDE SEQUENCE [LARGE SCALE GENOMIC DNA]</scope>
    <source>
        <strain>HaA2</strain>
    </source>
</reference>
<protein>
    <recommendedName>
        <fullName evidence="1">Phosphomethylpyrimidine synthase</fullName>
        <ecNumber evidence="1">4.1.99.17</ecNumber>
    </recommendedName>
    <alternativeName>
        <fullName evidence="1">Hydroxymethylpyrimidine phosphate synthase</fullName>
        <shortName evidence="1">HMP-P synthase</shortName>
        <shortName evidence="1">HMP-phosphate synthase</shortName>
        <shortName evidence="1">HMPP synthase</shortName>
    </alternativeName>
    <alternativeName>
        <fullName evidence="1">Thiamine biosynthesis protein ThiC</fullName>
    </alternativeName>
</protein>
<accession>Q2IYP8</accession>
<keyword id="KW-0004">4Fe-4S</keyword>
<keyword id="KW-0408">Iron</keyword>
<keyword id="KW-0411">Iron-sulfur</keyword>
<keyword id="KW-0456">Lyase</keyword>
<keyword id="KW-0479">Metal-binding</keyword>
<keyword id="KW-1185">Reference proteome</keyword>
<keyword id="KW-0949">S-adenosyl-L-methionine</keyword>
<keyword id="KW-0784">Thiamine biosynthesis</keyword>
<keyword id="KW-0862">Zinc</keyword>
<feature type="chain" id="PRO_0000242297" description="Phosphomethylpyrimidine synthase">
    <location>
        <begin position="1"/>
        <end position="646"/>
    </location>
</feature>
<feature type="region of interest" description="Disordered" evidence="2">
    <location>
        <begin position="1"/>
        <end position="21"/>
    </location>
</feature>
<feature type="compositionally biased region" description="Polar residues" evidence="2">
    <location>
        <begin position="1"/>
        <end position="13"/>
    </location>
</feature>
<feature type="binding site" evidence="1">
    <location>
        <position position="221"/>
    </location>
    <ligand>
        <name>substrate</name>
    </ligand>
</feature>
<feature type="binding site" evidence="1">
    <location>
        <position position="250"/>
    </location>
    <ligand>
        <name>substrate</name>
    </ligand>
</feature>
<feature type="binding site" evidence="1">
    <location>
        <position position="279"/>
    </location>
    <ligand>
        <name>substrate</name>
    </ligand>
</feature>
<feature type="binding site" evidence="1">
    <location>
        <position position="315"/>
    </location>
    <ligand>
        <name>substrate</name>
    </ligand>
</feature>
<feature type="binding site" evidence="1">
    <location>
        <begin position="335"/>
        <end position="337"/>
    </location>
    <ligand>
        <name>substrate</name>
    </ligand>
</feature>
<feature type="binding site" evidence="1">
    <location>
        <begin position="376"/>
        <end position="379"/>
    </location>
    <ligand>
        <name>substrate</name>
    </ligand>
</feature>
<feature type="binding site" evidence="1">
    <location>
        <position position="415"/>
    </location>
    <ligand>
        <name>substrate</name>
    </ligand>
</feature>
<feature type="binding site" evidence="1">
    <location>
        <position position="419"/>
    </location>
    <ligand>
        <name>Zn(2+)</name>
        <dbReference type="ChEBI" id="CHEBI:29105"/>
    </ligand>
</feature>
<feature type="binding site" evidence="1">
    <location>
        <position position="442"/>
    </location>
    <ligand>
        <name>substrate</name>
    </ligand>
</feature>
<feature type="binding site" evidence="1">
    <location>
        <position position="483"/>
    </location>
    <ligand>
        <name>Zn(2+)</name>
        <dbReference type="ChEBI" id="CHEBI:29105"/>
    </ligand>
</feature>
<feature type="binding site" evidence="1">
    <location>
        <position position="563"/>
    </location>
    <ligand>
        <name>[4Fe-4S] cluster</name>
        <dbReference type="ChEBI" id="CHEBI:49883"/>
        <note>4Fe-4S-S-AdoMet</note>
    </ligand>
</feature>
<feature type="binding site" evidence="1">
    <location>
        <position position="566"/>
    </location>
    <ligand>
        <name>[4Fe-4S] cluster</name>
        <dbReference type="ChEBI" id="CHEBI:49883"/>
        <note>4Fe-4S-S-AdoMet</note>
    </ligand>
</feature>
<feature type="binding site" evidence="1">
    <location>
        <position position="571"/>
    </location>
    <ligand>
        <name>[4Fe-4S] cluster</name>
        <dbReference type="ChEBI" id="CHEBI:49883"/>
        <note>4Fe-4S-S-AdoMet</note>
    </ligand>
</feature>
<organism>
    <name type="scientific">Rhodopseudomonas palustris (strain HaA2)</name>
    <dbReference type="NCBI Taxonomy" id="316058"/>
    <lineage>
        <taxon>Bacteria</taxon>
        <taxon>Pseudomonadati</taxon>
        <taxon>Pseudomonadota</taxon>
        <taxon>Alphaproteobacteria</taxon>
        <taxon>Hyphomicrobiales</taxon>
        <taxon>Nitrobacteraceae</taxon>
        <taxon>Rhodopseudomonas</taxon>
    </lineage>
</organism>
<proteinExistence type="inferred from homology"/>
<dbReference type="EC" id="4.1.99.17" evidence="1"/>
<dbReference type="EMBL" id="CP000250">
    <property type="protein sequence ID" value="ABD06662.1"/>
    <property type="molecule type" value="Genomic_DNA"/>
</dbReference>
<dbReference type="RefSeq" id="WP_011440850.1">
    <property type="nucleotide sequence ID" value="NC_007778.1"/>
</dbReference>
<dbReference type="SMR" id="Q2IYP8"/>
<dbReference type="STRING" id="316058.RPB_1954"/>
<dbReference type="KEGG" id="rpb:RPB_1954"/>
<dbReference type="eggNOG" id="COG0422">
    <property type="taxonomic scope" value="Bacteria"/>
</dbReference>
<dbReference type="HOGENOM" id="CLU_013181_2_1_5"/>
<dbReference type="OrthoDB" id="9805897at2"/>
<dbReference type="UniPathway" id="UPA00060"/>
<dbReference type="Proteomes" id="UP000008809">
    <property type="component" value="Chromosome"/>
</dbReference>
<dbReference type="GO" id="GO:0005829">
    <property type="term" value="C:cytosol"/>
    <property type="evidence" value="ECO:0007669"/>
    <property type="project" value="TreeGrafter"/>
</dbReference>
<dbReference type="GO" id="GO:0051539">
    <property type="term" value="F:4 iron, 4 sulfur cluster binding"/>
    <property type="evidence" value="ECO:0007669"/>
    <property type="project" value="UniProtKB-KW"/>
</dbReference>
<dbReference type="GO" id="GO:0016830">
    <property type="term" value="F:carbon-carbon lyase activity"/>
    <property type="evidence" value="ECO:0007669"/>
    <property type="project" value="InterPro"/>
</dbReference>
<dbReference type="GO" id="GO:0008270">
    <property type="term" value="F:zinc ion binding"/>
    <property type="evidence" value="ECO:0007669"/>
    <property type="project" value="UniProtKB-UniRule"/>
</dbReference>
<dbReference type="GO" id="GO:0009228">
    <property type="term" value="P:thiamine biosynthetic process"/>
    <property type="evidence" value="ECO:0007669"/>
    <property type="project" value="UniProtKB-KW"/>
</dbReference>
<dbReference type="GO" id="GO:0009229">
    <property type="term" value="P:thiamine diphosphate biosynthetic process"/>
    <property type="evidence" value="ECO:0007669"/>
    <property type="project" value="UniProtKB-UniRule"/>
</dbReference>
<dbReference type="FunFam" id="3.20.20.540:FF:000001">
    <property type="entry name" value="Phosphomethylpyrimidine synthase"/>
    <property type="match status" value="1"/>
</dbReference>
<dbReference type="Gene3D" id="6.10.250.620">
    <property type="match status" value="1"/>
</dbReference>
<dbReference type="Gene3D" id="3.20.20.540">
    <property type="entry name" value="Radical SAM ThiC family, central domain"/>
    <property type="match status" value="1"/>
</dbReference>
<dbReference type="HAMAP" id="MF_00089">
    <property type="entry name" value="ThiC"/>
    <property type="match status" value="1"/>
</dbReference>
<dbReference type="InterPro" id="IPR037509">
    <property type="entry name" value="ThiC"/>
</dbReference>
<dbReference type="InterPro" id="IPR025747">
    <property type="entry name" value="ThiC-associated_dom"/>
</dbReference>
<dbReference type="InterPro" id="IPR038521">
    <property type="entry name" value="ThiC/Bza_core_dom"/>
</dbReference>
<dbReference type="InterPro" id="IPR002817">
    <property type="entry name" value="ThiC/BzaA/B"/>
</dbReference>
<dbReference type="NCBIfam" id="NF006763">
    <property type="entry name" value="PRK09284.1"/>
    <property type="match status" value="1"/>
</dbReference>
<dbReference type="NCBIfam" id="NF009895">
    <property type="entry name" value="PRK13352.1"/>
    <property type="match status" value="1"/>
</dbReference>
<dbReference type="NCBIfam" id="TIGR00190">
    <property type="entry name" value="thiC"/>
    <property type="match status" value="1"/>
</dbReference>
<dbReference type="PANTHER" id="PTHR30557:SF1">
    <property type="entry name" value="PHOSPHOMETHYLPYRIMIDINE SYNTHASE, CHLOROPLASTIC"/>
    <property type="match status" value="1"/>
</dbReference>
<dbReference type="PANTHER" id="PTHR30557">
    <property type="entry name" value="THIAMINE BIOSYNTHESIS PROTEIN THIC"/>
    <property type="match status" value="1"/>
</dbReference>
<dbReference type="Pfam" id="PF13667">
    <property type="entry name" value="ThiC-associated"/>
    <property type="match status" value="1"/>
</dbReference>
<dbReference type="Pfam" id="PF01964">
    <property type="entry name" value="ThiC_Rad_SAM"/>
    <property type="match status" value="1"/>
</dbReference>
<dbReference type="SFLD" id="SFLDF00407">
    <property type="entry name" value="phosphomethylpyrimidine_syntha"/>
    <property type="match status" value="1"/>
</dbReference>
<dbReference type="SFLD" id="SFLDG01114">
    <property type="entry name" value="phosphomethylpyrimidine_syntha"/>
    <property type="match status" value="1"/>
</dbReference>
<dbReference type="SFLD" id="SFLDS00113">
    <property type="entry name" value="Radical_SAM_Phosphomethylpyrim"/>
    <property type="match status" value="1"/>
</dbReference>
<gene>
    <name evidence="1" type="primary">thiC</name>
    <name type="ordered locus">RPB_1954</name>
</gene>
<comment type="function">
    <text evidence="1">Catalyzes the synthesis of the hydroxymethylpyrimidine phosphate (HMP-P) moiety of thiamine from aminoimidazole ribotide (AIR) in a radical S-adenosyl-L-methionine (SAM)-dependent reaction.</text>
</comment>
<comment type="catalytic activity">
    <reaction evidence="1">
        <text>5-amino-1-(5-phospho-beta-D-ribosyl)imidazole + S-adenosyl-L-methionine = 4-amino-2-methyl-5-(phosphooxymethyl)pyrimidine + CO + 5'-deoxyadenosine + formate + L-methionine + 3 H(+)</text>
        <dbReference type="Rhea" id="RHEA:24840"/>
        <dbReference type="ChEBI" id="CHEBI:15378"/>
        <dbReference type="ChEBI" id="CHEBI:15740"/>
        <dbReference type="ChEBI" id="CHEBI:17245"/>
        <dbReference type="ChEBI" id="CHEBI:17319"/>
        <dbReference type="ChEBI" id="CHEBI:57844"/>
        <dbReference type="ChEBI" id="CHEBI:58354"/>
        <dbReference type="ChEBI" id="CHEBI:59789"/>
        <dbReference type="ChEBI" id="CHEBI:137981"/>
        <dbReference type="EC" id="4.1.99.17"/>
    </reaction>
</comment>
<comment type="cofactor">
    <cofactor evidence="1">
        <name>[4Fe-4S] cluster</name>
        <dbReference type="ChEBI" id="CHEBI:49883"/>
    </cofactor>
    <text evidence="1">Binds 1 [4Fe-4S] cluster per subunit. The cluster is coordinated with 3 cysteines and an exchangeable S-adenosyl-L-methionine.</text>
</comment>
<comment type="pathway">
    <text evidence="1">Cofactor biosynthesis; thiamine diphosphate biosynthesis.</text>
</comment>
<comment type="subunit">
    <text evidence="1">Homodimer.</text>
</comment>
<comment type="similarity">
    <text evidence="1">Belongs to the ThiC family.</text>
</comment>